<accession>P20405</accession>
<gene>
    <name type="primary">5.9</name>
</gene>
<name>V59_BPT3</name>
<sequence length="52" mass="6063">MSRDLVTIPRDVWNDMQGYIDSLERENDSLKNQLMEADEYVAELEEKLNGTS</sequence>
<reference key="1">
    <citation type="journal article" date="1989" name="J. Mol. Biol.">
        <title>Sequence of bacteriophage T3 DNA from gene 2.5 through gene 9.</title>
        <authorList>
            <person name="Beck P.J."/>
            <person name="Gonzalez S."/>
            <person name="Ward C.L."/>
            <person name="Molineux I.J."/>
        </authorList>
    </citation>
    <scope>NUCLEOTIDE SEQUENCE [GENOMIC DNA]</scope>
    <source>
        <strain>Luria</strain>
    </source>
</reference>
<proteinExistence type="predicted"/>
<feature type="chain" id="PRO_0000106502" description="Gene 5.9 protein">
    <location>
        <begin position="1"/>
        <end position="52"/>
    </location>
</feature>
<organism>
    <name type="scientific">Enterobacteria phage T3</name>
    <name type="common">Bacteriophage T3</name>
    <dbReference type="NCBI Taxonomy" id="10759"/>
    <lineage>
        <taxon>Viruses</taxon>
        <taxon>Duplodnaviria</taxon>
        <taxon>Heunggongvirae</taxon>
        <taxon>Uroviricota</taxon>
        <taxon>Caudoviricetes</taxon>
        <taxon>Autographiviridae</taxon>
        <taxon>Studiervirinae</taxon>
        <taxon>Teetrevirus</taxon>
        <taxon>Teetrevirus T3</taxon>
    </lineage>
</organism>
<organismHost>
    <name type="scientific">Escherichia coli</name>
    <dbReference type="NCBI Taxonomy" id="562"/>
</organismHost>
<protein>
    <recommendedName>
        <fullName>Gene 5.9 protein</fullName>
    </recommendedName>
</protein>
<dbReference type="EMBL" id="X17255">
    <property type="protein sequence ID" value="CAA35146.1"/>
    <property type="molecule type" value="Genomic_DNA"/>
</dbReference>
<dbReference type="PIR" id="S07502">
    <property type="entry name" value="S07502"/>
</dbReference>
<dbReference type="RefSeq" id="NP_523326.1">
    <property type="nucleotide sequence ID" value="NC_003298.1"/>
</dbReference>
<dbReference type="SMR" id="P20405"/>
<dbReference type="GeneID" id="927433"/>
<dbReference type="KEGG" id="vg:927433"/>
<dbReference type="OrthoDB" id="25722at10239"/>